<proteinExistence type="inferred from homology"/>
<name>RL33_ARTS2</name>
<organism>
    <name type="scientific">Arthrobacter sp. (strain FB24)</name>
    <dbReference type="NCBI Taxonomy" id="290399"/>
    <lineage>
        <taxon>Bacteria</taxon>
        <taxon>Bacillati</taxon>
        <taxon>Actinomycetota</taxon>
        <taxon>Actinomycetes</taxon>
        <taxon>Micrococcales</taxon>
        <taxon>Micrococcaceae</taxon>
        <taxon>Arthrobacter</taxon>
    </lineage>
</organism>
<dbReference type="EMBL" id="CP000454">
    <property type="protein sequence ID" value="ABK05295.1"/>
    <property type="molecule type" value="Genomic_DNA"/>
</dbReference>
<dbReference type="RefSeq" id="WP_011693743.1">
    <property type="nucleotide sequence ID" value="NC_008541.1"/>
</dbReference>
<dbReference type="SMR" id="A0K1X5"/>
<dbReference type="STRING" id="290399.Arth_3920"/>
<dbReference type="KEGG" id="art:Arth_3920"/>
<dbReference type="eggNOG" id="COG0267">
    <property type="taxonomic scope" value="Bacteria"/>
</dbReference>
<dbReference type="HOGENOM" id="CLU_190949_1_1_11"/>
<dbReference type="OrthoDB" id="21586at2"/>
<dbReference type="Proteomes" id="UP000000754">
    <property type="component" value="Chromosome"/>
</dbReference>
<dbReference type="GO" id="GO:0022625">
    <property type="term" value="C:cytosolic large ribosomal subunit"/>
    <property type="evidence" value="ECO:0007669"/>
    <property type="project" value="TreeGrafter"/>
</dbReference>
<dbReference type="GO" id="GO:0003735">
    <property type="term" value="F:structural constituent of ribosome"/>
    <property type="evidence" value="ECO:0007669"/>
    <property type="project" value="InterPro"/>
</dbReference>
<dbReference type="GO" id="GO:0006412">
    <property type="term" value="P:translation"/>
    <property type="evidence" value="ECO:0007669"/>
    <property type="project" value="UniProtKB-UniRule"/>
</dbReference>
<dbReference type="FunFam" id="2.20.28.120:FF:000002">
    <property type="entry name" value="50S ribosomal protein L33"/>
    <property type="match status" value="1"/>
</dbReference>
<dbReference type="Gene3D" id="2.20.28.120">
    <property type="entry name" value="Ribosomal protein L33"/>
    <property type="match status" value="1"/>
</dbReference>
<dbReference type="HAMAP" id="MF_00294">
    <property type="entry name" value="Ribosomal_bL33"/>
    <property type="match status" value="1"/>
</dbReference>
<dbReference type="InterPro" id="IPR001705">
    <property type="entry name" value="Ribosomal_bL33"/>
</dbReference>
<dbReference type="InterPro" id="IPR018264">
    <property type="entry name" value="Ribosomal_bL33_CS"/>
</dbReference>
<dbReference type="InterPro" id="IPR038584">
    <property type="entry name" value="Ribosomal_bL33_sf"/>
</dbReference>
<dbReference type="InterPro" id="IPR011332">
    <property type="entry name" value="Ribosomal_zn-bd"/>
</dbReference>
<dbReference type="NCBIfam" id="NF001860">
    <property type="entry name" value="PRK00595.1"/>
    <property type="match status" value="1"/>
</dbReference>
<dbReference type="NCBIfam" id="TIGR01023">
    <property type="entry name" value="rpmG_bact"/>
    <property type="match status" value="1"/>
</dbReference>
<dbReference type="PANTHER" id="PTHR15238">
    <property type="entry name" value="54S RIBOSOMAL PROTEIN L39, MITOCHONDRIAL"/>
    <property type="match status" value="1"/>
</dbReference>
<dbReference type="PANTHER" id="PTHR15238:SF1">
    <property type="entry name" value="LARGE RIBOSOMAL SUBUNIT PROTEIN BL33M"/>
    <property type="match status" value="1"/>
</dbReference>
<dbReference type="Pfam" id="PF00471">
    <property type="entry name" value="Ribosomal_L33"/>
    <property type="match status" value="1"/>
</dbReference>
<dbReference type="SUPFAM" id="SSF57829">
    <property type="entry name" value="Zn-binding ribosomal proteins"/>
    <property type="match status" value="1"/>
</dbReference>
<dbReference type="PROSITE" id="PS00582">
    <property type="entry name" value="RIBOSOMAL_L33"/>
    <property type="match status" value="1"/>
</dbReference>
<accession>A0K1X5</accession>
<evidence type="ECO:0000255" key="1">
    <source>
        <dbReference type="HAMAP-Rule" id="MF_00294"/>
    </source>
</evidence>
<evidence type="ECO:0000305" key="2"/>
<feature type="chain" id="PRO_1000004142" description="Large ribosomal subunit protein bL33">
    <location>
        <begin position="1"/>
        <end position="55"/>
    </location>
</feature>
<comment type="similarity">
    <text evidence="1">Belongs to the bacterial ribosomal protein bL33 family.</text>
</comment>
<protein>
    <recommendedName>
        <fullName evidence="1">Large ribosomal subunit protein bL33</fullName>
    </recommendedName>
    <alternativeName>
        <fullName evidence="2">50S ribosomal protein L33</fullName>
    </alternativeName>
</protein>
<reference key="1">
    <citation type="journal article" date="2013" name="Stand. Genomic Sci.">
        <title>Complete genome sequence of Arthrobacter sp. strain FB24.</title>
        <authorList>
            <person name="Nakatsu C.H."/>
            <person name="Barabote R."/>
            <person name="Thompson S."/>
            <person name="Bruce D."/>
            <person name="Detter C."/>
            <person name="Brettin T."/>
            <person name="Han C."/>
            <person name="Beasley F."/>
            <person name="Chen W."/>
            <person name="Konopka A."/>
            <person name="Xie G."/>
        </authorList>
    </citation>
    <scope>NUCLEOTIDE SEQUENCE [LARGE SCALE GENOMIC DNA]</scope>
    <source>
        <strain>FB24</strain>
    </source>
</reference>
<gene>
    <name evidence="1" type="primary">rpmG</name>
    <name type="ordered locus">Arth_3920</name>
</gene>
<keyword id="KW-1185">Reference proteome</keyword>
<keyword id="KW-0687">Ribonucleoprotein</keyword>
<keyword id="KW-0689">Ribosomal protein</keyword>
<sequence length="55" mass="6678">MAKDKDVRPIIKLKSTAGTGYTYVTRKNRRNDPDRMVLKKYDPRIRKHVEFREER</sequence>